<comment type="subcellular location">
    <subcellularLocation>
        <location>Plastid</location>
        <location>Chloroplast</location>
    </subcellularLocation>
</comment>
<comment type="similarity">
    <text evidence="1">Belongs to the universal ribosomal protein uS2 family.</text>
</comment>
<reference key="1">
    <citation type="submission" date="2008-03" db="EMBL/GenBank/DDBJ databases">
        <title>Guizotia abyssinica chloroplast sequenced using Solexa.</title>
        <authorList>
            <person name="Kane N.C."/>
            <person name="Dempewolf H."/>
            <person name="Stewart M.L."/>
            <person name="Cronk Q."/>
            <person name="Rieseberrg L.H."/>
        </authorList>
    </citation>
    <scope>NUCLEOTIDE SEQUENCE [LARGE SCALE GENOMIC DNA]</scope>
    <source>
        <strain>cv. PI 508077</strain>
    </source>
</reference>
<dbReference type="EMBL" id="EU549769">
    <property type="protein sequence ID" value="ACB86517.1"/>
    <property type="molecule type" value="Genomic_DNA"/>
</dbReference>
<dbReference type="RefSeq" id="YP_001837350.1">
    <property type="nucleotide sequence ID" value="NC_010601.1"/>
</dbReference>
<dbReference type="SMR" id="B2LMI3"/>
<dbReference type="GeneID" id="6219214"/>
<dbReference type="GO" id="GO:0009507">
    <property type="term" value="C:chloroplast"/>
    <property type="evidence" value="ECO:0007669"/>
    <property type="project" value="UniProtKB-SubCell"/>
</dbReference>
<dbReference type="GO" id="GO:0005763">
    <property type="term" value="C:mitochondrial small ribosomal subunit"/>
    <property type="evidence" value="ECO:0007669"/>
    <property type="project" value="TreeGrafter"/>
</dbReference>
<dbReference type="GO" id="GO:0003735">
    <property type="term" value="F:structural constituent of ribosome"/>
    <property type="evidence" value="ECO:0007669"/>
    <property type="project" value="InterPro"/>
</dbReference>
<dbReference type="GO" id="GO:0006412">
    <property type="term" value="P:translation"/>
    <property type="evidence" value="ECO:0007669"/>
    <property type="project" value="UniProtKB-UniRule"/>
</dbReference>
<dbReference type="CDD" id="cd01425">
    <property type="entry name" value="RPS2"/>
    <property type="match status" value="1"/>
</dbReference>
<dbReference type="FunFam" id="3.40.50.10490:FF:000101">
    <property type="match status" value="1"/>
</dbReference>
<dbReference type="FunFam" id="1.10.287.610:FF:000001">
    <property type="entry name" value="30S ribosomal protein S2"/>
    <property type="match status" value="1"/>
</dbReference>
<dbReference type="Gene3D" id="3.40.50.10490">
    <property type="entry name" value="Glucose-6-phosphate isomerase like protein, domain 1"/>
    <property type="match status" value="1"/>
</dbReference>
<dbReference type="Gene3D" id="1.10.287.610">
    <property type="entry name" value="Helix hairpin bin"/>
    <property type="match status" value="1"/>
</dbReference>
<dbReference type="HAMAP" id="MF_00291_B">
    <property type="entry name" value="Ribosomal_uS2_B"/>
    <property type="match status" value="1"/>
</dbReference>
<dbReference type="InterPro" id="IPR001865">
    <property type="entry name" value="Ribosomal_uS2"/>
</dbReference>
<dbReference type="InterPro" id="IPR005706">
    <property type="entry name" value="Ribosomal_uS2_bac/mit/plastid"/>
</dbReference>
<dbReference type="InterPro" id="IPR018130">
    <property type="entry name" value="Ribosomal_uS2_CS"/>
</dbReference>
<dbReference type="InterPro" id="IPR023591">
    <property type="entry name" value="Ribosomal_uS2_flav_dom_sf"/>
</dbReference>
<dbReference type="NCBIfam" id="TIGR01011">
    <property type="entry name" value="rpsB_bact"/>
    <property type="match status" value="1"/>
</dbReference>
<dbReference type="PANTHER" id="PTHR12534">
    <property type="entry name" value="30S RIBOSOMAL PROTEIN S2 PROKARYOTIC AND ORGANELLAR"/>
    <property type="match status" value="1"/>
</dbReference>
<dbReference type="PANTHER" id="PTHR12534:SF0">
    <property type="entry name" value="SMALL RIBOSOMAL SUBUNIT PROTEIN US2M"/>
    <property type="match status" value="1"/>
</dbReference>
<dbReference type="Pfam" id="PF00318">
    <property type="entry name" value="Ribosomal_S2"/>
    <property type="match status" value="1"/>
</dbReference>
<dbReference type="PRINTS" id="PR00395">
    <property type="entry name" value="RIBOSOMALS2"/>
</dbReference>
<dbReference type="SUPFAM" id="SSF52313">
    <property type="entry name" value="Ribosomal protein S2"/>
    <property type="match status" value="1"/>
</dbReference>
<dbReference type="PROSITE" id="PS00962">
    <property type="entry name" value="RIBOSOMAL_S2_1"/>
    <property type="match status" value="1"/>
</dbReference>
<dbReference type="PROSITE" id="PS00963">
    <property type="entry name" value="RIBOSOMAL_S2_2"/>
    <property type="match status" value="1"/>
</dbReference>
<keyword id="KW-0150">Chloroplast</keyword>
<keyword id="KW-0934">Plastid</keyword>
<keyword id="KW-0687">Ribonucleoprotein</keyword>
<keyword id="KW-0689">Ribosomal protein</keyword>
<accession>B2LMI3</accession>
<organism>
    <name type="scientific">Guizotia abyssinica</name>
    <name type="common">Niger</name>
    <name type="synonym">Ramtilla</name>
    <dbReference type="NCBI Taxonomy" id="4230"/>
    <lineage>
        <taxon>Eukaryota</taxon>
        <taxon>Viridiplantae</taxon>
        <taxon>Streptophyta</taxon>
        <taxon>Embryophyta</taxon>
        <taxon>Tracheophyta</taxon>
        <taxon>Spermatophyta</taxon>
        <taxon>Magnoliopsida</taxon>
        <taxon>eudicotyledons</taxon>
        <taxon>Gunneridae</taxon>
        <taxon>Pentapetalae</taxon>
        <taxon>asterids</taxon>
        <taxon>campanulids</taxon>
        <taxon>Asterales</taxon>
        <taxon>Asteraceae</taxon>
        <taxon>Asteroideae</taxon>
        <taxon>Heliantheae alliance</taxon>
        <taxon>Millerieae</taxon>
        <taxon>Guizotia</taxon>
    </lineage>
</organism>
<sequence length="236" mass="26859">MTRRYWNINLEEMMEAGVHFGHGTRKWNPKMAPYISAKRKGIHITNLTRTARFLSEACDLVFDAASRGKQFLIVGTKNKEADSVAWAAIRARCHYVNKKWLGGMLTNWSTTETRLHKFRDLRTEQKTGGLNRLPKRDAAMLKRQLSHLQTYLGGIKYMTGLPDIVIIVDQHEEYTPLQECITLGIPTICLIDTNCDPDLADISIPSNDYSISSIRLILNKLVFAICEGRSGYIRNS</sequence>
<geneLocation type="chloroplast"/>
<evidence type="ECO:0000305" key="1"/>
<name>RR2_GUIAB</name>
<gene>
    <name type="primary">rps2</name>
    <name type="ordered locus">GuabCp011</name>
</gene>
<protein>
    <recommendedName>
        <fullName evidence="1">Small ribosomal subunit protein uS2c</fullName>
    </recommendedName>
    <alternativeName>
        <fullName>30S ribosomal protein S2, chloroplastic</fullName>
    </alternativeName>
</protein>
<proteinExistence type="inferred from homology"/>
<feature type="chain" id="PRO_0000352117" description="Small ribosomal subunit protein uS2c">
    <location>
        <begin position="1"/>
        <end position="236"/>
    </location>
</feature>